<dbReference type="EC" id="1.14.14.92" evidence="5"/>
<dbReference type="EMBL" id="AM270198">
    <property type="protein sequence ID" value="CAK40290.1"/>
    <property type="molecule type" value="Genomic_DNA"/>
</dbReference>
<dbReference type="RefSeq" id="XP_001393667.1">
    <property type="nucleotide sequence ID" value="XM_001393630.2"/>
</dbReference>
<dbReference type="SMR" id="A2QTW5"/>
<dbReference type="GlyCosmos" id="A2QTW5">
    <property type="glycosylation" value="2 sites, No reported glycans"/>
</dbReference>
<dbReference type="EnsemblFungi" id="CAK40290">
    <property type="protein sequence ID" value="CAK40290"/>
    <property type="gene ID" value="An09g03500"/>
</dbReference>
<dbReference type="GeneID" id="4983886"/>
<dbReference type="KEGG" id="ang:An09g03500"/>
<dbReference type="VEuPathDB" id="FungiDB:An09g03500"/>
<dbReference type="HOGENOM" id="CLU_001570_14_0_1"/>
<dbReference type="SABIO-RK" id="A2QTW5"/>
<dbReference type="Proteomes" id="UP000006706">
    <property type="component" value="Chromosome 1L"/>
</dbReference>
<dbReference type="GO" id="GO:0043231">
    <property type="term" value="C:intracellular membrane-bounded organelle"/>
    <property type="evidence" value="ECO:0000314"/>
    <property type="project" value="AspGD"/>
</dbReference>
<dbReference type="GO" id="GO:0016020">
    <property type="term" value="C:membrane"/>
    <property type="evidence" value="ECO:0007669"/>
    <property type="project" value="UniProtKB-SubCell"/>
</dbReference>
<dbReference type="GO" id="GO:0018664">
    <property type="term" value="F:benzoate 4-monooxygenase activity"/>
    <property type="evidence" value="ECO:0007669"/>
    <property type="project" value="RHEA"/>
</dbReference>
<dbReference type="GO" id="GO:0020037">
    <property type="term" value="F:heme binding"/>
    <property type="evidence" value="ECO:0007669"/>
    <property type="project" value="InterPro"/>
</dbReference>
<dbReference type="GO" id="GO:0005506">
    <property type="term" value="F:iron ion binding"/>
    <property type="evidence" value="ECO:0007669"/>
    <property type="project" value="InterPro"/>
</dbReference>
<dbReference type="GO" id="GO:0043639">
    <property type="term" value="P:benzoate catabolic process"/>
    <property type="evidence" value="ECO:0000314"/>
    <property type="project" value="AspGD"/>
</dbReference>
<dbReference type="CDD" id="cd11061">
    <property type="entry name" value="CYP67-like"/>
    <property type="match status" value="1"/>
</dbReference>
<dbReference type="FunFam" id="1.10.630.10:FF:000053">
    <property type="entry name" value="Cytochrome P450 benzoate 4-monooxygenase"/>
    <property type="match status" value="1"/>
</dbReference>
<dbReference type="Gene3D" id="1.10.630.10">
    <property type="entry name" value="Cytochrome P450"/>
    <property type="match status" value="1"/>
</dbReference>
<dbReference type="InterPro" id="IPR001128">
    <property type="entry name" value="Cyt_P450"/>
</dbReference>
<dbReference type="InterPro" id="IPR017972">
    <property type="entry name" value="Cyt_P450_CS"/>
</dbReference>
<dbReference type="InterPro" id="IPR002401">
    <property type="entry name" value="Cyt_P450_E_grp-I"/>
</dbReference>
<dbReference type="InterPro" id="IPR036396">
    <property type="entry name" value="Cyt_P450_sf"/>
</dbReference>
<dbReference type="InterPro" id="IPR050121">
    <property type="entry name" value="Cytochrome_P450_monoxygenase"/>
</dbReference>
<dbReference type="PANTHER" id="PTHR24305:SF29">
    <property type="entry name" value="BENZOATE-PARA-HYDROXYLASE"/>
    <property type="match status" value="1"/>
</dbReference>
<dbReference type="PANTHER" id="PTHR24305">
    <property type="entry name" value="CYTOCHROME P450"/>
    <property type="match status" value="1"/>
</dbReference>
<dbReference type="Pfam" id="PF00067">
    <property type="entry name" value="p450"/>
    <property type="match status" value="1"/>
</dbReference>
<dbReference type="PRINTS" id="PR00463">
    <property type="entry name" value="EP450I"/>
</dbReference>
<dbReference type="PRINTS" id="PR00385">
    <property type="entry name" value="P450"/>
</dbReference>
<dbReference type="SUPFAM" id="SSF48264">
    <property type="entry name" value="Cytochrome P450"/>
    <property type="match status" value="1"/>
</dbReference>
<dbReference type="PROSITE" id="PS00086">
    <property type="entry name" value="CYTOCHROME_P450"/>
    <property type="match status" value="1"/>
</dbReference>
<evidence type="ECO:0000250" key="1">
    <source>
        <dbReference type="UniProtKB" id="P04798"/>
    </source>
</evidence>
<evidence type="ECO:0000255" key="2"/>
<evidence type="ECO:0000255" key="3">
    <source>
        <dbReference type="PROSITE-ProRule" id="PRU00498"/>
    </source>
</evidence>
<evidence type="ECO:0000269" key="4">
    <source>
    </source>
</evidence>
<evidence type="ECO:0000269" key="5">
    <source>
    </source>
</evidence>
<evidence type="ECO:0000269" key="6">
    <source ref="5"/>
</evidence>
<evidence type="ECO:0000303" key="7">
    <source>
    </source>
</evidence>
<evidence type="ECO:0000303" key="8">
    <source>
    </source>
</evidence>
<evidence type="ECO:0000305" key="9"/>
<gene>
    <name evidence="8" type="primary">bphA</name>
    <name evidence="7" type="synonym">cyp53A1</name>
    <name type="ORF">An09g03500</name>
</gene>
<feature type="chain" id="PRO_0000453615" description="Benzoate 4-monooxygenase bphA">
    <location>
        <begin position="1"/>
        <end position="517"/>
    </location>
</feature>
<feature type="transmembrane region" description="Helical" evidence="2">
    <location>
        <begin position="4"/>
        <end position="24"/>
    </location>
</feature>
<feature type="binding site" description="axial binding residue" evidence="1">
    <location>
        <position position="461"/>
    </location>
    <ligand>
        <name>heme</name>
        <dbReference type="ChEBI" id="CHEBI:30413"/>
    </ligand>
    <ligandPart>
        <name>Fe</name>
        <dbReference type="ChEBI" id="CHEBI:18248"/>
    </ligandPart>
</feature>
<feature type="glycosylation site" description="N-linked (GlcNAc...) asparagine" evidence="3">
    <location>
        <position position="282"/>
    </location>
</feature>
<feature type="glycosylation site" description="N-linked (GlcNAc...) asparagine" evidence="3">
    <location>
        <position position="325"/>
    </location>
</feature>
<comment type="function">
    <text evidence="5 6">Cytochrome P450 monooxygenase; part of the benzoic acid degradation pathway also known as the protocatechuic acid pathway (PubMed:11594739, Ref.5). Benzoic acid debradation begins with the conversion of benzoic acid into 4-hydroxybenzoic acid through hydroxylation by the benzoate-4-monooxygenase bphA, and its partner NADPH-cytochrome P450 reductase cprA which act as a mediator in electron donation from NADPH (PubMed:11594739). 4-Hydroxybenzoic acid is then converted into 3,4-dihydroxybenzoic acid (also called protocatechuic acid) by the p-hydroxybenzoate-m-hydroxylase phhA (Ref.5). Protocatechuic acid is converted into 3-carboxy-cis,cis-muconic acid by the intradiol ring-cleavage dioxygenase prcA, which is further metabolized through the 3-oxoadipate pathway to finally enter the tricarboxylic acid cycle (TCA) (Ref.5).</text>
</comment>
<comment type="catalytic activity">
    <reaction evidence="5">
        <text>benzoate + reduced [NADPH--hemoprotein reductase] + O2 = 4-hydroxybenzoate + oxidized [NADPH--hemoprotein reductase] + H2O + H(+)</text>
        <dbReference type="Rhea" id="RHEA:18033"/>
        <dbReference type="Rhea" id="RHEA-COMP:11964"/>
        <dbReference type="Rhea" id="RHEA-COMP:11965"/>
        <dbReference type="ChEBI" id="CHEBI:15377"/>
        <dbReference type="ChEBI" id="CHEBI:15378"/>
        <dbReference type="ChEBI" id="CHEBI:15379"/>
        <dbReference type="ChEBI" id="CHEBI:16150"/>
        <dbReference type="ChEBI" id="CHEBI:17879"/>
        <dbReference type="ChEBI" id="CHEBI:57618"/>
        <dbReference type="ChEBI" id="CHEBI:58210"/>
        <dbReference type="EC" id="1.14.14.92"/>
    </reaction>
</comment>
<comment type="cofactor">
    <cofactor evidence="1">
        <name>heme</name>
        <dbReference type="ChEBI" id="CHEBI:30413"/>
    </cofactor>
</comment>
<comment type="biophysicochemical properties">
    <kinetics>
        <KM evidence="5">0.083 mM for benzoate</KM>
        <KM evidence="5">0.097 mM for 2-fluorobenzoate</KM>
        <KM evidence="5">0.31 mM for 2-chlorobenzoate</KM>
        <KM evidence="5">0.28 mM for 2-hydroxybenzoate</KM>
        <KM evidence="5">1.6 mM for 2-methylbenzoate</KM>
        <KM evidence="5">0.086 mM for 3-fluorobenzoate</KM>
        <KM evidence="5">0.127 mM for 3-chlorobenzoate</KM>
        <KM evidence="5">0.673 mM for 3-hydroxybenzoate</KM>
        <KM evidence="5">0.189 mM for 3-methylbenzoate</KM>
        <text evidence="5">kcat is 270 min(-1) for benzoate.</text>
    </kinetics>
</comment>
<comment type="subcellular location">
    <subcellularLocation>
        <location evidence="2">Membrane</location>
        <topology evidence="2">Single-pass membrane protein</topology>
    </subcellularLocation>
</comment>
<comment type="induction">
    <text evidence="4 6">Expression is induced in the presence of caffeic acid, p-coumaric acid, p-hydroxybenzoic acid, protocatechuic acid, and benzoic acid.</text>
</comment>
<comment type="disruption phenotype">
    <text evidence="6">Leads to reduced growth on benzoic acid (Ref.5). Growth is also reduced on benzaldehyde, benzyl alcohol, and cinnamic acid (Ref.5).</text>
</comment>
<comment type="similarity">
    <text evidence="9">Belongs to the cytochrome P450 family.</text>
</comment>
<proteinExistence type="evidence at protein level"/>
<name>BPHA_ASPNC</name>
<sequence>MLALLLSPYGAYLGLALLVLYYLLPYLKRAHLRDIPAPGLAAFTNFWLLLQTRRGHRFVVVDNAHKKYGKLVRIAPRHTSIADDGAIQAVYGHGNGFLKSDFYDAFVSIHRGLFNTRDRAEHTRKRKTVSHTFSMKSIGQFEQYIHGNIELFVKQWNRMADTQRNPKTGFASLDALNWFNYLAFDIIGDLAFGAPFGMLDKGKDFAEMRKTPDSPPSYVQAVEVLNRRGEVSATLGCYPALKPFAKYLPDSFFRDGIQAVEDLAGIAVARVNERLRPEVMANNTRVDLLARLMEGKDSNGEKLGRAELTAEALTQLIAGSDTTSNTSCAILYWCMRTPGVIEKLHKVLDEAIPQDVDVPTHAMVKDIPYLQWVIWETMRIHSTSAMGLPREIPAGNPPVTISGHTFYPGDVVSVPSYTIHRSKEIWGPDAEQFVPERWDPARLTPRQKAAFIPFSTGPRACVGRNVAEMELLVICGTVFRLFEFEMQQEGPMETREGFLRKPLGLQVGMKRRQPGSA</sequence>
<organism>
    <name type="scientific">Aspergillus niger (strain ATCC MYA-4892 / CBS 513.88 / FGSC A1513)</name>
    <dbReference type="NCBI Taxonomy" id="425011"/>
    <lineage>
        <taxon>Eukaryota</taxon>
        <taxon>Fungi</taxon>
        <taxon>Dikarya</taxon>
        <taxon>Ascomycota</taxon>
        <taxon>Pezizomycotina</taxon>
        <taxon>Eurotiomycetes</taxon>
        <taxon>Eurotiomycetidae</taxon>
        <taxon>Eurotiales</taxon>
        <taxon>Aspergillaceae</taxon>
        <taxon>Aspergillus</taxon>
        <taxon>Aspergillus subgen. Circumdati</taxon>
    </lineage>
</organism>
<reference key="1">
    <citation type="journal article" date="2007" name="Nat. Biotechnol.">
        <title>Genome sequencing and analysis of the versatile cell factory Aspergillus niger CBS 513.88.</title>
        <authorList>
            <person name="Pel H.J."/>
            <person name="de Winde J.H."/>
            <person name="Archer D.B."/>
            <person name="Dyer P.S."/>
            <person name="Hofmann G."/>
            <person name="Schaap P.J."/>
            <person name="Turner G."/>
            <person name="de Vries R.P."/>
            <person name="Albang R."/>
            <person name="Albermann K."/>
            <person name="Andersen M.R."/>
            <person name="Bendtsen J.D."/>
            <person name="Benen J.A.E."/>
            <person name="van den Berg M."/>
            <person name="Breestraat S."/>
            <person name="Caddick M.X."/>
            <person name="Contreras R."/>
            <person name="Cornell M."/>
            <person name="Coutinho P.M."/>
            <person name="Danchin E.G.J."/>
            <person name="Debets A.J.M."/>
            <person name="Dekker P."/>
            <person name="van Dijck P.W.M."/>
            <person name="van Dijk A."/>
            <person name="Dijkhuizen L."/>
            <person name="Driessen A.J.M."/>
            <person name="d'Enfert C."/>
            <person name="Geysens S."/>
            <person name="Goosen C."/>
            <person name="Groot G.S.P."/>
            <person name="de Groot P.W.J."/>
            <person name="Guillemette T."/>
            <person name="Henrissat B."/>
            <person name="Herweijer M."/>
            <person name="van den Hombergh J.P.T.W."/>
            <person name="van den Hondel C.A.M.J.J."/>
            <person name="van der Heijden R.T.J.M."/>
            <person name="van der Kaaij R.M."/>
            <person name="Klis F.M."/>
            <person name="Kools H.J."/>
            <person name="Kubicek C.P."/>
            <person name="van Kuyk P.A."/>
            <person name="Lauber J."/>
            <person name="Lu X."/>
            <person name="van der Maarel M.J.E.C."/>
            <person name="Meulenberg R."/>
            <person name="Menke H."/>
            <person name="Mortimer M.A."/>
            <person name="Nielsen J."/>
            <person name="Oliver S.G."/>
            <person name="Olsthoorn M."/>
            <person name="Pal K."/>
            <person name="van Peij N.N.M.E."/>
            <person name="Ram A.F.J."/>
            <person name="Rinas U."/>
            <person name="Roubos J.A."/>
            <person name="Sagt C.M.J."/>
            <person name="Schmoll M."/>
            <person name="Sun J."/>
            <person name="Ussery D."/>
            <person name="Varga J."/>
            <person name="Vervecken W."/>
            <person name="van de Vondervoort P.J.J."/>
            <person name="Wedler H."/>
            <person name="Woesten H.A.B."/>
            <person name="Zeng A.-P."/>
            <person name="van Ooyen A.J.J."/>
            <person name="Visser J."/>
            <person name="Stam H."/>
        </authorList>
    </citation>
    <scope>NUCLEOTIDE SEQUENCE [LARGE SCALE GENOMIC DNA]</scope>
    <source>
        <strain>ATCC MYA-4892 / CBS 513.88 / FGSC A1513</strain>
    </source>
</reference>
<reference key="2">
    <citation type="journal article" date="1991" name="Curr. Genet.">
        <title>Genetic analysis of Aspergillus niger mutants defective in benzoate-4-hydroxylase function.</title>
        <authorList>
            <person name="Boschloo J.G."/>
            <person name="Moonen E."/>
            <person name="van Gorcom R.F."/>
            <person name="Hermes H.F."/>
            <person name="Bos C.J."/>
        </authorList>
    </citation>
    <scope>IDENTIFICATION</scope>
</reference>
<reference key="3">
    <citation type="journal article" date="2000" name="Mol. Gen. Genet.">
        <title>Regulation of expression of the Aspergillus niger benzoate para-hydroxylase cytochrome P450 system.</title>
        <authorList>
            <person name="van den Brink J.M."/>
            <person name="Punt P.J."/>
            <person name="van Gorcom R.F."/>
            <person name="van den Hondel C.A."/>
        </authorList>
    </citation>
    <scope>INDUCTION</scope>
</reference>
<reference key="4">
    <citation type="journal article" date="2001" name="Arch. Biochem. Biophys.">
        <title>Purification and characterization of benzoate-para-hydroxylase, a cytochrome P450 (CYP53A1), from Aspergillus niger.</title>
        <authorList>
            <person name="Faber B.W."/>
            <person name="van Gorcom R.F.M."/>
            <person name="Duine J.A."/>
        </authorList>
    </citation>
    <scope>FUNCTION</scope>
    <scope>CATALYTIC ACTIVITY</scope>
    <scope>BIOPHYSICOCHEMICAL PROPERTIES</scope>
    <scope>CHARACTERIZATION</scope>
    <source>
        <strain>T18.5</strain>
    </source>
</reference>
<reference key="5">
    <citation type="journal article" date="2019" name="ACS Sustain. Chem. Eng.">
        <title>Discovery of novel p-hydroxybenzoate-m-hydroxylase, protocatechuate 3,4 ring-cleavage dioxygenase, and hydroxyquinol 1,2 ring-cleavage dioxygenase from the filamentous fungus Aspergillus niger.</title>
        <authorList>
            <person name="Lubbers R.J.M."/>
            <person name="Dilokpimol A."/>
            <person name="Peng M."/>
            <person name="Visser J."/>
            <person name="Makela M.R."/>
            <person name="Hilden K.S."/>
            <person name="de Vries R.P."/>
        </authorList>
    </citation>
    <scope>FUNCTION</scope>
    <scope>INDUCTION</scope>
    <scope>DISRUPTION PHENOTYPE</scope>
</reference>
<keyword id="KW-0325">Glycoprotein</keyword>
<keyword id="KW-0349">Heme</keyword>
<keyword id="KW-0408">Iron</keyword>
<keyword id="KW-0472">Membrane</keyword>
<keyword id="KW-0479">Metal-binding</keyword>
<keyword id="KW-0503">Monooxygenase</keyword>
<keyword id="KW-0560">Oxidoreductase</keyword>
<keyword id="KW-1185">Reference proteome</keyword>
<keyword id="KW-0812">Transmembrane</keyword>
<keyword id="KW-1133">Transmembrane helix</keyword>
<accession>A2QTW5</accession>
<protein>
    <recommendedName>
        <fullName evidence="7">Benzoate 4-monooxygenase bphA</fullName>
        <ecNumber evidence="5">1.14.14.92</ecNumber>
    </recommendedName>
    <alternativeName>
        <fullName evidence="7">Benzoate-para-hydroxylase A</fullName>
        <shortName evidence="7">BpH</shortName>
    </alternativeName>
    <alternativeName>
        <fullName evidence="7">Cytochrome P450 monooxygenase cyp53A1</fullName>
    </alternativeName>
</protein>